<name>RS7_XANCB</name>
<feature type="chain" id="PRO_1000126025" description="Small ribosomal subunit protein uS7">
    <location>
        <begin position="1"/>
        <end position="155"/>
    </location>
</feature>
<sequence length="155" mass="17260">MSRKGSTPQRTVLPDPKHGSETIARFINMVMQSGKKSVAEKIVYGAMDVIGEKNPNAVELVQKALDNVAPAVEVKSRRVGGATYQVPVEVRSSRRMALAMRWLIDSARKRGENTMPRKLAAELLDASESRGGAIKKREETHRMAEANKAFAHYRW</sequence>
<gene>
    <name evidence="1" type="primary">rpsG</name>
    <name type="ordered locus">xcc-b100_3463</name>
</gene>
<proteinExistence type="inferred from homology"/>
<dbReference type="EMBL" id="AM920689">
    <property type="protein sequence ID" value="CAP52828.1"/>
    <property type="molecule type" value="Genomic_DNA"/>
</dbReference>
<dbReference type="SMR" id="B0RU86"/>
<dbReference type="KEGG" id="xca:xcc-b100_3463"/>
<dbReference type="HOGENOM" id="CLU_072226_1_1_6"/>
<dbReference type="Proteomes" id="UP000001188">
    <property type="component" value="Chromosome"/>
</dbReference>
<dbReference type="GO" id="GO:0015935">
    <property type="term" value="C:small ribosomal subunit"/>
    <property type="evidence" value="ECO:0007669"/>
    <property type="project" value="InterPro"/>
</dbReference>
<dbReference type="GO" id="GO:0019843">
    <property type="term" value="F:rRNA binding"/>
    <property type="evidence" value="ECO:0007669"/>
    <property type="project" value="UniProtKB-UniRule"/>
</dbReference>
<dbReference type="GO" id="GO:0003735">
    <property type="term" value="F:structural constituent of ribosome"/>
    <property type="evidence" value="ECO:0007669"/>
    <property type="project" value="InterPro"/>
</dbReference>
<dbReference type="GO" id="GO:0000049">
    <property type="term" value="F:tRNA binding"/>
    <property type="evidence" value="ECO:0007669"/>
    <property type="project" value="UniProtKB-UniRule"/>
</dbReference>
<dbReference type="GO" id="GO:0006412">
    <property type="term" value="P:translation"/>
    <property type="evidence" value="ECO:0007669"/>
    <property type="project" value="UniProtKB-UniRule"/>
</dbReference>
<dbReference type="CDD" id="cd14869">
    <property type="entry name" value="uS7_Bacteria"/>
    <property type="match status" value="1"/>
</dbReference>
<dbReference type="FunFam" id="1.10.455.10:FF:000001">
    <property type="entry name" value="30S ribosomal protein S7"/>
    <property type="match status" value="1"/>
</dbReference>
<dbReference type="Gene3D" id="1.10.455.10">
    <property type="entry name" value="Ribosomal protein S7 domain"/>
    <property type="match status" value="1"/>
</dbReference>
<dbReference type="HAMAP" id="MF_00480_B">
    <property type="entry name" value="Ribosomal_uS7_B"/>
    <property type="match status" value="1"/>
</dbReference>
<dbReference type="InterPro" id="IPR000235">
    <property type="entry name" value="Ribosomal_uS7"/>
</dbReference>
<dbReference type="InterPro" id="IPR005717">
    <property type="entry name" value="Ribosomal_uS7_bac/org-type"/>
</dbReference>
<dbReference type="InterPro" id="IPR020606">
    <property type="entry name" value="Ribosomal_uS7_CS"/>
</dbReference>
<dbReference type="InterPro" id="IPR023798">
    <property type="entry name" value="Ribosomal_uS7_dom"/>
</dbReference>
<dbReference type="InterPro" id="IPR036823">
    <property type="entry name" value="Ribosomal_uS7_dom_sf"/>
</dbReference>
<dbReference type="NCBIfam" id="TIGR01029">
    <property type="entry name" value="rpsG_bact"/>
    <property type="match status" value="1"/>
</dbReference>
<dbReference type="PANTHER" id="PTHR11205">
    <property type="entry name" value="RIBOSOMAL PROTEIN S7"/>
    <property type="match status" value="1"/>
</dbReference>
<dbReference type="Pfam" id="PF00177">
    <property type="entry name" value="Ribosomal_S7"/>
    <property type="match status" value="1"/>
</dbReference>
<dbReference type="PIRSF" id="PIRSF002122">
    <property type="entry name" value="RPS7p_RPS7a_RPS5e_RPS7o"/>
    <property type="match status" value="1"/>
</dbReference>
<dbReference type="SUPFAM" id="SSF47973">
    <property type="entry name" value="Ribosomal protein S7"/>
    <property type="match status" value="1"/>
</dbReference>
<dbReference type="PROSITE" id="PS00052">
    <property type="entry name" value="RIBOSOMAL_S7"/>
    <property type="match status" value="1"/>
</dbReference>
<protein>
    <recommendedName>
        <fullName evidence="1">Small ribosomal subunit protein uS7</fullName>
    </recommendedName>
    <alternativeName>
        <fullName evidence="2">30S ribosomal protein S7</fullName>
    </alternativeName>
</protein>
<evidence type="ECO:0000255" key="1">
    <source>
        <dbReference type="HAMAP-Rule" id="MF_00480"/>
    </source>
</evidence>
<evidence type="ECO:0000305" key="2"/>
<reference key="1">
    <citation type="journal article" date="2008" name="J. Biotechnol.">
        <title>The genome of Xanthomonas campestris pv. campestris B100 and its use for the reconstruction of metabolic pathways involved in xanthan biosynthesis.</title>
        <authorList>
            <person name="Vorhoelter F.-J."/>
            <person name="Schneiker S."/>
            <person name="Goesmann A."/>
            <person name="Krause L."/>
            <person name="Bekel T."/>
            <person name="Kaiser O."/>
            <person name="Linke B."/>
            <person name="Patschkowski T."/>
            <person name="Rueckert C."/>
            <person name="Schmid J."/>
            <person name="Sidhu V.K."/>
            <person name="Sieber V."/>
            <person name="Tauch A."/>
            <person name="Watt S.A."/>
            <person name="Weisshaar B."/>
            <person name="Becker A."/>
            <person name="Niehaus K."/>
            <person name="Puehler A."/>
        </authorList>
    </citation>
    <scope>NUCLEOTIDE SEQUENCE [LARGE SCALE GENOMIC DNA]</scope>
    <source>
        <strain>B100</strain>
    </source>
</reference>
<keyword id="KW-0687">Ribonucleoprotein</keyword>
<keyword id="KW-0689">Ribosomal protein</keyword>
<keyword id="KW-0694">RNA-binding</keyword>
<keyword id="KW-0699">rRNA-binding</keyword>
<keyword id="KW-0820">tRNA-binding</keyword>
<comment type="function">
    <text evidence="1">One of the primary rRNA binding proteins, it binds directly to 16S rRNA where it nucleates assembly of the head domain of the 30S subunit. Is located at the subunit interface close to the decoding center, probably blocks exit of the E-site tRNA.</text>
</comment>
<comment type="subunit">
    <text evidence="1">Part of the 30S ribosomal subunit. Contacts proteins S9 and S11.</text>
</comment>
<comment type="similarity">
    <text evidence="1">Belongs to the universal ribosomal protein uS7 family.</text>
</comment>
<accession>B0RU86</accession>
<organism>
    <name type="scientific">Xanthomonas campestris pv. campestris (strain B100)</name>
    <dbReference type="NCBI Taxonomy" id="509169"/>
    <lineage>
        <taxon>Bacteria</taxon>
        <taxon>Pseudomonadati</taxon>
        <taxon>Pseudomonadota</taxon>
        <taxon>Gammaproteobacteria</taxon>
        <taxon>Lysobacterales</taxon>
        <taxon>Lysobacteraceae</taxon>
        <taxon>Xanthomonas</taxon>
    </lineage>
</organism>